<sequence>MNAMLVLFIASALFISEHNTEEVKTTPIPNHQCVNATCERKLDALGNAVITKCPQGCLCVVRGASNIVPANGTCFQLATTKPPMAPGDNKDNKEEESN</sequence>
<organism>
    <name type="scientific">Rhipicephalus appendiculatus</name>
    <name type="common">Brown ear tick</name>
    <dbReference type="NCBI Taxonomy" id="34631"/>
    <lineage>
        <taxon>Eukaryota</taxon>
        <taxon>Metazoa</taxon>
        <taxon>Ecdysozoa</taxon>
        <taxon>Arthropoda</taxon>
        <taxon>Chelicerata</taxon>
        <taxon>Arachnida</taxon>
        <taxon>Acari</taxon>
        <taxon>Parasitiformes</taxon>
        <taxon>Ixodida</taxon>
        <taxon>Ixodoidea</taxon>
        <taxon>Ixodidae</taxon>
        <taxon>Rhipicephalinae</taxon>
        <taxon>Rhipicephalus</taxon>
        <taxon>Rhipicephalus</taxon>
    </lineage>
</organism>
<keyword id="KW-0002">3D-structure</keyword>
<keyword id="KW-1216">Complement system impairing toxin</keyword>
<keyword id="KW-1015">Disulfide bond</keyword>
<keyword id="KW-0964">Secreted</keyword>
<keyword id="KW-0732">Signal</keyword>
<keyword id="KW-0800">Toxin</keyword>
<proteinExistence type="evidence at protein level"/>
<comment type="function">
    <text evidence="1 4">Complement inhibitor (PubMed:27018802). Prevents complement-mediated C5 activation by binding to C5 (PubMed:27018802). Binds C5 at a different binding site than the other tick complement inhibitors OmCI and CirpT1, and the drug eculizumab (By similarity). Inhibits the complement in human and guinea pig but not in other species tested (rabbit, rat, mouse, and pig) (PubMed:27018802).</text>
</comment>
<comment type="subcellular location">
    <subcellularLocation>
        <location evidence="7">Secreted</location>
    </subcellularLocation>
</comment>
<comment type="tissue specificity">
    <text evidence="7">Expressed in salivary glands.</text>
</comment>
<comment type="similarity">
    <text evidence="6">Belongs to the RaCI family.</text>
</comment>
<protein>
    <recommendedName>
        <fullName evidence="5">Complement inhibitor RaCI1</fullName>
    </recommendedName>
    <alternativeName>
        <fullName evidence="8">Rhipicephalus appendiculatus complement inhibitor 1</fullName>
    </alternativeName>
</protein>
<name>C5I1_RHIAP</name>
<reference evidence="8 9" key="1">
    <citation type="journal article" date="2016" name="Nat. Struct. Mol. Biol.">
        <title>Structural basis for therapeutic inhibition of complement C5.</title>
        <authorList>
            <person name="Jore M.M."/>
            <person name="Johnson S."/>
            <person name="Sheppard D."/>
            <person name="Barber N.M."/>
            <person name="Li Y.I."/>
            <person name="Nunn M.A."/>
            <person name="Elmlund H."/>
            <person name="Lea S.M."/>
        </authorList>
    </citation>
    <scope>NUCLEOTIDE SEQUENCE [MRNA]</scope>
    <scope>X-RAY CRYSTALLOGRAPHY (3.12 ANGSTROMS) OF 21-98 IN COMPLEX WITH HUMAN COMPLEMENT C5 AND THE TICK COMPLEMENT INHBIBITOR OMCI</scope>
    <scope>FUNCTION</scope>
    <source>
        <tissue>Salivary gland</tissue>
    </source>
</reference>
<reference evidence="10" key="2">
    <citation type="journal article" date="2020" name="Proc. Natl. Acad. Sci. U.S.A.">
        <title>An inhibitor of complement C5 provides structural insights into activation.</title>
        <authorList>
            <person name="Reichhardt M.P."/>
            <person name="Johnson S."/>
            <person name="Tang T."/>
            <person name="Morgan T."/>
            <person name="Tebeka N."/>
            <person name="Popitsch N."/>
            <person name="Deme J.C."/>
            <person name="Jore M.M."/>
            <person name="Lea S.M."/>
        </authorList>
    </citation>
    <scope>STRUCTURE BY ELECTRON MICROSCOPY (3.50 ANGSTROMS) OF 21-98 IN COMPLEX WITH HUMAN COMPLEMENT C5 AND THE TICK COMPLEMENT INHBIBITORS OMCI AND CIRPT1</scope>
    <scope>DISULFIDE BONDS</scope>
</reference>
<accession>A0A141SFN4</accession>
<accession>A0A158RFT5</accession>
<dbReference type="EMBL" id="KU533794">
    <property type="protein sequence ID" value="AML25523.1"/>
    <property type="molecule type" value="mRNA"/>
</dbReference>
<dbReference type="PDB" id="5HCE">
    <property type="method" value="X-ray"/>
    <property type="resolution" value="3.12 A"/>
    <property type="chains" value="D=21-98"/>
</dbReference>
<dbReference type="PDB" id="6RQJ">
    <property type="method" value="EM"/>
    <property type="resolution" value="3.50 A"/>
    <property type="chains" value="D=21-98"/>
</dbReference>
<dbReference type="PDBsum" id="5HCE"/>
<dbReference type="PDBsum" id="6RQJ"/>
<dbReference type="EMDB" id="EMD-4983"/>
<dbReference type="SMR" id="A0A141SFN4"/>
<dbReference type="GO" id="GO:0005576">
    <property type="term" value="C:extracellular region"/>
    <property type="evidence" value="ECO:0007669"/>
    <property type="project" value="UniProtKB-SubCell"/>
</dbReference>
<dbReference type="GO" id="GO:0090729">
    <property type="term" value="F:toxin activity"/>
    <property type="evidence" value="ECO:0007669"/>
    <property type="project" value="UniProtKB-KW"/>
</dbReference>
<dbReference type="CDD" id="cd22951">
    <property type="entry name" value="C5_RaCI-like"/>
    <property type="match status" value="1"/>
</dbReference>
<evidence type="ECO:0000250" key="1">
    <source>
        <dbReference type="UniProtKB" id="A0A146B485"/>
    </source>
</evidence>
<evidence type="ECO:0000255" key="2"/>
<evidence type="ECO:0000256" key="3">
    <source>
        <dbReference type="SAM" id="MobiDB-lite"/>
    </source>
</evidence>
<evidence type="ECO:0000269" key="4">
    <source>
    </source>
</evidence>
<evidence type="ECO:0000303" key="5">
    <source>
    </source>
</evidence>
<evidence type="ECO:0000305" key="6"/>
<evidence type="ECO:0000305" key="7">
    <source>
    </source>
</evidence>
<evidence type="ECO:0000312" key="8">
    <source>
        <dbReference type="EMBL" id="AML25523.1"/>
    </source>
</evidence>
<evidence type="ECO:0007744" key="9">
    <source>
        <dbReference type="PDB" id="5HCE"/>
    </source>
</evidence>
<evidence type="ECO:0007744" key="10">
    <source>
        <dbReference type="PDB" id="6RQJ"/>
    </source>
</evidence>
<evidence type="ECO:0007829" key="11">
    <source>
        <dbReference type="PDB" id="5HCE"/>
    </source>
</evidence>
<evidence type="ECO:0007829" key="12">
    <source>
        <dbReference type="PDB" id="6RQJ"/>
    </source>
</evidence>
<feature type="signal peptide" evidence="2">
    <location>
        <begin position="1"/>
        <end position="20"/>
    </location>
</feature>
<feature type="chain" id="PRO_5007492727" description="Complement inhibitor RaCI1">
    <location>
        <begin position="21"/>
        <end position="98"/>
    </location>
</feature>
<feature type="region of interest" description="Disordered" evidence="3">
    <location>
        <begin position="79"/>
        <end position="98"/>
    </location>
</feature>
<feature type="compositionally biased region" description="Basic and acidic residues" evidence="3">
    <location>
        <begin position="88"/>
        <end position="98"/>
    </location>
</feature>
<feature type="disulfide bond" evidence="4 10">
    <location>
        <begin position="33"/>
        <end position="57"/>
    </location>
</feature>
<feature type="disulfide bond" evidence="4 10">
    <location>
        <begin position="38"/>
        <end position="59"/>
    </location>
</feature>
<feature type="disulfide bond" evidence="4 10">
    <location>
        <begin position="53"/>
        <end position="74"/>
    </location>
</feature>
<feature type="strand" evidence="11">
    <location>
        <begin position="38"/>
        <end position="42"/>
    </location>
</feature>
<feature type="strand" evidence="12">
    <location>
        <begin position="44"/>
        <end position="46"/>
    </location>
</feature>
<feature type="strand" evidence="11">
    <location>
        <begin position="48"/>
        <end position="50"/>
    </location>
</feature>
<feature type="strand" evidence="11">
    <location>
        <begin position="58"/>
        <end position="60"/>
    </location>
</feature>
<feature type="strand" evidence="11">
    <location>
        <begin position="68"/>
        <end position="75"/>
    </location>
</feature>